<feature type="chain" id="PRO_0000323444" description="Elongation factor Ts">
    <location>
        <begin position="1"/>
        <end position="293"/>
    </location>
</feature>
<feature type="region of interest" description="Involved in Mg(2+) ion dislocation from EF-Tu" evidence="1">
    <location>
        <begin position="80"/>
        <end position="83"/>
    </location>
</feature>
<comment type="function">
    <text evidence="1">Associates with the EF-Tu.GDP complex and induces the exchange of GDP to GTP. It remains bound to the aminoacyl-tRNA.EF-Tu.GTP complex up to the GTP hydrolysis stage on the ribosome.</text>
</comment>
<comment type="subcellular location">
    <subcellularLocation>
        <location evidence="1">Cytoplasm</location>
    </subcellularLocation>
</comment>
<comment type="similarity">
    <text evidence="1">Belongs to the EF-Ts family.</text>
</comment>
<comment type="sequence caution" evidence="2">
    <conflict type="erroneous initiation">
        <sequence resource="EMBL-CDS" id="ABN00663"/>
    </conflict>
</comment>
<accession>A2SB73</accession>
<sequence length="293" mass="31193">MAAITASMVAELRAKTDAPMMECKKALTEADGDMAKAEELLRVKLGNKASKAASRVTAEGVVASFVGANAGALVELNCETDFVAKNDDFNAFAKTVAELVATQNPADVAALSALPLDGKTVDEVRLALVGKIGENISIRRFVRFETSNKLATYLHGSRIGVIVEYTGAQEQVGKDVAMHVAAMKPVSLSADEVPADLIEKERRVAEQKAAESGKPAEIVAKMVDGSVQKFLKEVSLLNQPFVKNDKQTIEQMLKAADAAVQKFALFVVGEGIEKRQDDFAAEVAAQVAAAKQQ</sequence>
<keyword id="KW-0963">Cytoplasm</keyword>
<keyword id="KW-0251">Elongation factor</keyword>
<keyword id="KW-0648">Protein biosynthesis</keyword>
<gene>
    <name evidence="1" type="primary">tsf</name>
    <name type="ordered locus">BMA10229_A3256</name>
</gene>
<evidence type="ECO:0000255" key="1">
    <source>
        <dbReference type="HAMAP-Rule" id="MF_00050"/>
    </source>
</evidence>
<evidence type="ECO:0000305" key="2"/>
<name>EFTS_BURM9</name>
<reference key="1">
    <citation type="journal article" date="2010" name="Genome Biol. Evol.">
        <title>Continuing evolution of Burkholderia mallei through genome reduction and large-scale rearrangements.</title>
        <authorList>
            <person name="Losada L."/>
            <person name="Ronning C.M."/>
            <person name="DeShazer D."/>
            <person name="Woods D."/>
            <person name="Fedorova N."/>
            <person name="Kim H.S."/>
            <person name="Shabalina S.A."/>
            <person name="Pearson T.R."/>
            <person name="Brinkac L."/>
            <person name="Tan P."/>
            <person name="Nandi T."/>
            <person name="Crabtree J."/>
            <person name="Badger J."/>
            <person name="Beckstrom-Sternberg S."/>
            <person name="Saqib M."/>
            <person name="Schutzer S.E."/>
            <person name="Keim P."/>
            <person name="Nierman W.C."/>
        </authorList>
    </citation>
    <scope>NUCLEOTIDE SEQUENCE [LARGE SCALE GENOMIC DNA]</scope>
    <source>
        <strain>NCTC 10229</strain>
    </source>
</reference>
<organism>
    <name type="scientific">Burkholderia mallei (strain NCTC 10229)</name>
    <dbReference type="NCBI Taxonomy" id="412022"/>
    <lineage>
        <taxon>Bacteria</taxon>
        <taxon>Pseudomonadati</taxon>
        <taxon>Pseudomonadota</taxon>
        <taxon>Betaproteobacteria</taxon>
        <taxon>Burkholderiales</taxon>
        <taxon>Burkholderiaceae</taxon>
        <taxon>Burkholderia</taxon>
        <taxon>pseudomallei group</taxon>
    </lineage>
</organism>
<protein>
    <recommendedName>
        <fullName evidence="1">Elongation factor Ts</fullName>
        <shortName evidence="1">EF-Ts</shortName>
    </recommendedName>
</protein>
<proteinExistence type="inferred from homology"/>
<dbReference type="EMBL" id="CP000546">
    <property type="protein sequence ID" value="ABN00663.1"/>
    <property type="status" value="ALT_INIT"/>
    <property type="molecule type" value="Genomic_DNA"/>
</dbReference>
<dbReference type="RefSeq" id="WP_004197087.1">
    <property type="nucleotide sequence ID" value="NC_008836.1"/>
</dbReference>
<dbReference type="SMR" id="A2SB73"/>
<dbReference type="GeneID" id="93060699"/>
<dbReference type="KEGG" id="bml:BMA10229_A3256"/>
<dbReference type="HOGENOM" id="CLU_047155_0_2_4"/>
<dbReference type="Proteomes" id="UP000002283">
    <property type="component" value="Chromosome I"/>
</dbReference>
<dbReference type="GO" id="GO:0005737">
    <property type="term" value="C:cytoplasm"/>
    <property type="evidence" value="ECO:0007669"/>
    <property type="project" value="UniProtKB-SubCell"/>
</dbReference>
<dbReference type="GO" id="GO:0003746">
    <property type="term" value="F:translation elongation factor activity"/>
    <property type="evidence" value="ECO:0007669"/>
    <property type="project" value="UniProtKB-UniRule"/>
</dbReference>
<dbReference type="CDD" id="cd14275">
    <property type="entry name" value="UBA_EF-Ts"/>
    <property type="match status" value="1"/>
</dbReference>
<dbReference type="FunFam" id="1.10.286.20:FF:000001">
    <property type="entry name" value="Elongation factor Ts"/>
    <property type="match status" value="1"/>
</dbReference>
<dbReference type="FunFam" id="1.10.8.10:FF:000001">
    <property type="entry name" value="Elongation factor Ts"/>
    <property type="match status" value="1"/>
</dbReference>
<dbReference type="Gene3D" id="1.10.286.20">
    <property type="match status" value="1"/>
</dbReference>
<dbReference type="Gene3D" id="1.10.8.10">
    <property type="entry name" value="DNA helicase RuvA subunit, C-terminal domain"/>
    <property type="match status" value="1"/>
</dbReference>
<dbReference type="Gene3D" id="3.30.479.20">
    <property type="entry name" value="Elongation factor Ts, dimerisation domain"/>
    <property type="match status" value="2"/>
</dbReference>
<dbReference type="HAMAP" id="MF_00050">
    <property type="entry name" value="EF_Ts"/>
    <property type="match status" value="1"/>
</dbReference>
<dbReference type="InterPro" id="IPR036402">
    <property type="entry name" value="EF-Ts_dimer_sf"/>
</dbReference>
<dbReference type="InterPro" id="IPR001816">
    <property type="entry name" value="Transl_elong_EFTs/EF1B"/>
</dbReference>
<dbReference type="InterPro" id="IPR014039">
    <property type="entry name" value="Transl_elong_EFTs/EF1B_dimer"/>
</dbReference>
<dbReference type="InterPro" id="IPR018101">
    <property type="entry name" value="Transl_elong_Ts_CS"/>
</dbReference>
<dbReference type="InterPro" id="IPR009060">
    <property type="entry name" value="UBA-like_sf"/>
</dbReference>
<dbReference type="NCBIfam" id="TIGR00116">
    <property type="entry name" value="tsf"/>
    <property type="match status" value="1"/>
</dbReference>
<dbReference type="PANTHER" id="PTHR11741">
    <property type="entry name" value="ELONGATION FACTOR TS"/>
    <property type="match status" value="1"/>
</dbReference>
<dbReference type="PANTHER" id="PTHR11741:SF0">
    <property type="entry name" value="ELONGATION FACTOR TS, MITOCHONDRIAL"/>
    <property type="match status" value="1"/>
</dbReference>
<dbReference type="Pfam" id="PF00889">
    <property type="entry name" value="EF_TS"/>
    <property type="match status" value="1"/>
</dbReference>
<dbReference type="SUPFAM" id="SSF54713">
    <property type="entry name" value="Elongation factor Ts (EF-Ts), dimerisation domain"/>
    <property type="match status" value="2"/>
</dbReference>
<dbReference type="SUPFAM" id="SSF46934">
    <property type="entry name" value="UBA-like"/>
    <property type="match status" value="1"/>
</dbReference>
<dbReference type="PROSITE" id="PS01127">
    <property type="entry name" value="EF_TS_2"/>
    <property type="match status" value="1"/>
</dbReference>